<sequence length="313" mass="34756">MEGTWIEVRVITKSEALEPISGIFYGLDCKGVAIEDPNDILGREQGPLTWDFADINILEHKGKVAVVKGYFSEEDNIDDVIAYVKERVEELKESGLDVGEGTVEAEKMFEEDWANNWKKYYKPIKIGEKIVIKPIWEEYEPTGEEMVVELDPGMAFGTGDHETTRMCVQALDKYVKADTTVFDIGTGSGILALVASKLGAKHVVGVDLDPVAVDSAKENISFNNVDNIEVLYGNLLDVVDGKADIVVANIIAEIICILVDDVKKALNKDGIFITSGIIHERRQMVIDKLEQEGFEVMEVNKDGEWNCIVAKLK</sequence>
<proteinExistence type="inferred from homology"/>
<evidence type="ECO:0000255" key="1">
    <source>
        <dbReference type="HAMAP-Rule" id="MF_00735"/>
    </source>
</evidence>
<name>PRMA_CLOPE</name>
<keyword id="KW-0963">Cytoplasm</keyword>
<keyword id="KW-0489">Methyltransferase</keyword>
<keyword id="KW-1185">Reference proteome</keyword>
<keyword id="KW-0949">S-adenosyl-L-methionine</keyword>
<keyword id="KW-0808">Transferase</keyword>
<gene>
    <name evidence="1" type="primary">prmA</name>
    <name type="ordered locus">CPE2027</name>
</gene>
<feature type="chain" id="PRO_0000192253" description="Ribosomal protein L11 methyltransferase">
    <location>
        <begin position="1"/>
        <end position="313"/>
    </location>
</feature>
<feature type="binding site" evidence="1">
    <location>
        <position position="164"/>
    </location>
    <ligand>
        <name>S-adenosyl-L-methionine</name>
        <dbReference type="ChEBI" id="CHEBI:59789"/>
    </ligand>
</feature>
<feature type="binding site" evidence="1">
    <location>
        <position position="185"/>
    </location>
    <ligand>
        <name>S-adenosyl-L-methionine</name>
        <dbReference type="ChEBI" id="CHEBI:59789"/>
    </ligand>
</feature>
<feature type="binding site" evidence="1">
    <location>
        <position position="207"/>
    </location>
    <ligand>
        <name>S-adenosyl-L-methionine</name>
        <dbReference type="ChEBI" id="CHEBI:59789"/>
    </ligand>
</feature>
<feature type="binding site" evidence="1">
    <location>
        <position position="249"/>
    </location>
    <ligand>
        <name>S-adenosyl-L-methionine</name>
        <dbReference type="ChEBI" id="CHEBI:59789"/>
    </ligand>
</feature>
<dbReference type="EC" id="2.1.1.-" evidence="1"/>
<dbReference type="EMBL" id="BA000016">
    <property type="protein sequence ID" value="BAB81733.1"/>
    <property type="molecule type" value="Genomic_DNA"/>
</dbReference>
<dbReference type="RefSeq" id="WP_003451530.1">
    <property type="nucleotide sequence ID" value="NC_003366.1"/>
</dbReference>
<dbReference type="SMR" id="Q8XIT6"/>
<dbReference type="STRING" id="195102.gene:10491297"/>
<dbReference type="KEGG" id="cpe:CPE2027"/>
<dbReference type="HOGENOM" id="CLU_049382_0_1_9"/>
<dbReference type="Proteomes" id="UP000000818">
    <property type="component" value="Chromosome"/>
</dbReference>
<dbReference type="GO" id="GO:0005737">
    <property type="term" value="C:cytoplasm"/>
    <property type="evidence" value="ECO:0007669"/>
    <property type="project" value="UniProtKB-SubCell"/>
</dbReference>
<dbReference type="GO" id="GO:0016279">
    <property type="term" value="F:protein-lysine N-methyltransferase activity"/>
    <property type="evidence" value="ECO:0007669"/>
    <property type="project" value="RHEA"/>
</dbReference>
<dbReference type="GO" id="GO:0032259">
    <property type="term" value="P:methylation"/>
    <property type="evidence" value="ECO:0007669"/>
    <property type="project" value="UniProtKB-KW"/>
</dbReference>
<dbReference type="CDD" id="cd02440">
    <property type="entry name" value="AdoMet_MTases"/>
    <property type="match status" value="1"/>
</dbReference>
<dbReference type="Gene3D" id="3.40.50.150">
    <property type="entry name" value="Vaccinia Virus protein VP39"/>
    <property type="match status" value="1"/>
</dbReference>
<dbReference type="HAMAP" id="MF_00735">
    <property type="entry name" value="Methyltr_PrmA"/>
    <property type="match status" value="1"/>
</dbReference>
<dbReference type="InterPro" id="IPR050078">
    <property type="entry name" value="Ribosomal_L11_MeTrfase_PrmA"/>
</dbReference>
<dbReference type="InterPro" id="IPR004498">
    <property type="entry name" value="Ribosomal_PrmA_MeTrfase"/>
</dbReference>
<dbReference type="InterPro" id="IPR029063">
    <property type="entry name" value="SAM-dependent_MTases_sf"/>
</dbReference>
<dbReference type="NCBIfam" id="TIGR00406">
    <property type="entry name" value="prmA"/>
    <property type="match status" value="1"/>
</dbReference>
<dbReference type="PANTHER" id="PTHR43648">
    <property type="entry name" value="ELECTRON TRANSFER FLAVOPROTEIN BETA SUBUNIT LYSINE METHYLTRANSFERASE"/>
    <property type="match status" value="1"/>
</dbReference>
<dbReference type="PANTHER" id="PTHR43648:SF1">
    <property type="entry name" value="ELECTRON TRANSFER FLAVOPROTEIN BETA SUBUNIT LYSINE METHYLTRANSFERASE"/>
    <property type="match status" value="1"/>
</dbReference>
<dbReference type="Pfam" id="PF06325">
    <property type="entry name" value="PrmA"/>
    <property type="match status" value="1"/>
</dbReference>
<dbReference type="PIRSF" id="PIRSF000401">
    <property type="entry name" value="RPL11_MTase"/>
    <property type="match status" value="1"/>
</dbReference>
<dbReference type="SUPFAM" id="SSF53335">
    <property type="entry name" value="S-adenosyl-L-methionine-dependent methyltransferases"/>
    <property type="match status" value="1"/>
</dbReference>
<accession>Q8XIT6</accession>
<reference key="1">
    <citation type="journal article" date="2002" name="Proc. Natl. Acad. Sci. U.S.A.">
        <title>Complete genome sequence of Clostridium perfringens, an anaerobic flesh-eater.</title>
        <authorList>
            <person name="Shimizu T."/>
            <person name="Ohtani K."/>
            <person name="Hirakawa H."/>
            <person name="Ohshima K."/>
            <person name="Yamashita A."/>
            <person name="Shiba T."/>
            <person name="Ogasawara N."/>
            <person name="Hattori M."/>
            <person name="Kuhara S."/>
            <person name="Hayashi H."/>
        </authorList>
    </citation>
    <scope>NUCLEOTIDE SEQUENCE [LARGE SCALE GENOMIC DNA]</scope>
    <source>
        <strain>13 / Type A</strain>
    </source>
</reference>
<organism>
    <name type="scientific">Clostridium perfringens (strain 13 / Type A)</name>
    <dbReference type="NCBI Taxonomy" id="195102"/>
    <lineage>
        <taxon>Bacteria</taxon>
        <taxon>Bacillati</taxon>
        <taxon>Bacillota</taxon>
        <taxon>Clostridia</taxon>
        <taxon>Eubacteriales</taxon>
        <taxon>Clostridiaceae</taxon>
        <taxon>Clostridium</taxon>
    </lineage>
</organism>
<comment type="function">
    <text evidence="1">Methylates ribosomal protein L11.</text>
</comment>
<comment type="catalytic activity">
    <reaction evidence="1">
        <text>L-lysyl-[protein] + 3 S-adenosyl-L-methionine = N(6),N(6),N(6)-trimethyl-L-lysyl-[protein] + 3 S-adenosyl-L-homocysteine + 3 H(+)</text>
        <dbReference type="Rhea" id="RHEA:54192"/>
        <dbReference type="Rhea" id="RHEA-COMP:9752"/>
        <dbReference type="Rhea" id="RHEA-COMP:13826"/>
        <dbReference type="ChEBI" id="CHEBI:15378"/>
        <dbReference type="ChEBI" id="CHEBI:29969"/>
        <dbReference type="ChEBI" id="CHEBI:57856"/>
        <dbReference type="ChEBI" id="CHEBI:59789"/>
        <dbReference type="ChEBI" id="CHEBI:61961"/>
    </reaction>
</comment>
<comment type="subcellular location">
    <subcellularLocation>
        <location evidence="1">Cytoplasm</location>
    </subcellularLocation>
</comment>
<comment type="similarity">
    <text evidence="1">Belongs to the methyltransferase superfamily. PrmA family.</text>
</comment>
<protein>
    <recommendedName>
        <fullName evidence="1">Ribosomal protein L11 methyltransferase</fullName>
        <shortName evidence="1">L11 Mtase</shortName>
        <ecNumber evidence="1">2.1.1.-</ecNumber>
    </recommendedName>
</protein>